<feature type="chain" id="PRO_0000264784" description="Acetylglutamate kinase">
    <location>
        <begin position="1"/>
        <end position="260"/>
    </location>
</feature>
<feature type="binding site" evidence="1">
    <location>
        <begin position="45"/>
        <end position="46"/>
    </location>
    <ligand>
        <name>substrate</name>
    </ligand>
</feature>
<feature type="binding site" evidence="1">
    <location>
        <position position="67"/>
    </location>
    <ligand>
        <name>substrate</name>
    </ligand>
</feature>
<feature type="binding site" evidence="1">
    <location>
        <position position="159"/>
    </location>
    <ligand>
        <name>substrate</name>
    </ligand>
</feature>
<feature type="site" description="Transition state stabilizer" evidence="1">
    <location>
        <position position="9"/>
    </location>
</feature>
<feature type="site" description="Transition state stabilizer" evidence="1">
    <location>
        <position position="218"/>
    </location>
</feature>
<sequence length="260" mass="27390">MNQRPLVIKLGGAVLSSIDTLTLLFKTISNYQQQAKRSLIIVHGGGYLVDELMAKLQLETIKKEGLRVTPKDQIGYITGALAGTANKMLQGQAMKNNVKAIGLSLADGGLCQITQLNPELGNVGLATAGDAKVLEAILATQVTPIISSIGITNDGELMNVNADQAAVAVATALDADLVLLSDVPGVLDAEKQLIKSLDSAQAEMLIHQAVITDGMIVKVRAALDAAQELGRAIEVASWRSPEKLAELFIGNSIGTQFQPQ</sequence>
<evidence type="ECO:0000255" key="1">
    <source>
        <dbReference type="HAMAP-Rule" id="MF_00082"/>
    </source>
</evidence>
<organism>
    <name type="scientific">Aliivibrio fischeri (strain ATCC 700601 / ES114)</name>
    <name type="common">Vibrio fischeri</name>
    <dbReference type="NCBI Taxonomy" id="312309"/>
    <lineage>
        <taxon>Bacteria</taxon>
        <taxon>Pseudomonadati</taxon>
        <taxon>Pseudomonadota</taxon>
        <taxon>Gammaproteobacteria</taxon>
        <taxon>Vibrionales</taxon>
        <taxon>Vibrionaceae</taxon>
        <taxon>Aliivibrio</taxon>
    </lineage>
</organism>
<protein>
    <recommendedName>
        <fullName evidence="1">Acetylglutamate kinase</fullName>
        <ecNumber evidence="1">2.7.2.8</ecNumber>
    </recommendedName>
    <alternativeName>
        <fullName evidence="1">N-acetyl-L-glutamate 5-phosphotransferase</fullName>
    </alternativeName>
    <alternativeName>
        <fullName evidence="1">NAG kinase</fullName>
        <shortName evidence="1">NAGK</shortName>
    </alternativeName>
</protein>
<gene>
    <name evidence="1" type="primary">argB</name>
    <name type="ordered locus">VF_2305</name>
</gene>
<keyword id="KW-0028">Amino-acid biosynthesis</keyword>
<keyword id="KW-0055">Arginine biosynthesis</keyword>
<keyword id="KW-0067">ATP-binding</keyword>
<keyword id="KW-0963">Cytoplasm</keyword>
<keyword id="KW-0418">Kinase</keyword>
<keyword id="KW-0547">Nucleotide-binding</keyword>
<keyword id="KW-1185">Reference proteome</keyword>
<keyword id="KW-0808">Transferase</keyword>
<reference key="1">
    <citation type="journal article" date="2005" name="Proc. Natl. Acad. Sci. U.S.A.">
        <title>Complete genome sequence of Vibrio fischeri: a symbiotic bacterium with pathogenic congeners.</title>
        <authorList>
            <person name="Ruby E.G."/>
            <person name="Urbanowski M."/>
            <person name="Campbell J."/>
            <person name="Dunn A."/>
            <person name="Faini M."/>
            <person name="Gunsalus R."/>
            <person name="Lostroh P."/>
            <person name="Lupp C."/>
            <person name="McCann J."/>
            <person name="Millikan D."/>
            <person name="Schaefer A."/>
            <person name="Stabb E."/>
            <person name="Stevens A."/>
            <person name="Visick K."/>
            <person name="Whistler C."/>
            <person name="Greenberg E.P."/>
        </authorList>
    </citation>
    <scope>NUCLEOTIDE SEQUENCE [LARGE SCALE GENOMIC DNA]</scope>
    <source>
        <strain>ATCC 700601 / ES114</strain>
    </source>
</reference>
<dbReference type="EC" id="2.7.2.8" evidence="1"/>
<dbReference type="EMBL" id="CP000020">
    <property type="protein sequence ID" value="AAW86800.1"/>
    <property type="molecule type" value="Genomic_DNA"/>
</dbReference>
<dbReference type="RefSeq" id="WP_011262712.1">
    <property type="nucleotide sequence ID" value="NZ_CAWLES010000001.1"/>
</dbReference>
<dbReference type="RefSeq" id="YP_205688.1">
    <property type="nucleotide sequence ID" value="NC_006840.2"/>
</dbReference>
<dbReference type="SMR" id="Q5E2E6"/>
<dbReference type="STRING" id="312309.VF_2305"/>
<dbReference type="EnsemblBacteria" id="AAW86800">
    <property type="protein sequence ID" value="AAW86800"/>
    <property type="gene ID" value="VF_2305"/>
</dbReference>
<dbReference type="GeneID" id="54165020"/>
<dbReference type="KEGG" id="vfi:VF_2305"/>
<dbReference type="PATRIC" id="fig|312309.11.peg.2343"/>
<dbReference type="eggNOG" id="COG0548">
    <property type="taxonomic scope" value="Bacteria"/>
</dbReference>
<dbReference type="HOGENOM" id="CLU_053680_1_1_6"/>
<dbReference type="OrthoDB" id="5915023at2"/>
<dbReference type="UniPathway" id="UPA00068">
    <property type="reaction ID" value="UER00107"/>
</dbReference>
<dbReference type="Proteomes" id="UP000000537">
    <property type="component" value="Chromosome I"/>
</dbReference>
<dbReference type="GO" id="GO:0005737">
    <property type="term" value="C:cytoplasm"/>
    <property type="evidence" value="ECO:0007669"/>
    <property type="project" value="UniProtKB-SubCell"/>
</dbReference>
<dbReference type="GO" id="GO:0003991">
    <property type="term" value="F:acetylglutamate kinase activity"/>
    <property type="evidence" value="ECO:0007669"/>
    <property type="project" value="UniProtKB-UniRule"/>
</dbReference>
<dbReference type="GO" id="GO:0005524">
    <property type="term" value="F:ATP binding"/>
    <property type="evidence" value="ECO:0007669"/>
    <property type="project" value="UniProtKB-UniRule"/>
</dbReference>
<dbReference type="GO" id="GO:0042450">
    <property type="term" value="P:arginine biosynthetic process via ornithine"/>
    <property type="evidence" value="ECO:0007669"/>
    <property type="project" value="UniProtKB-UniRule"/>
</dbReference>
<dbReference type="GO" id="GO:0006526">
    <property type="term" value="P:L-arginine biosynthetic process"/>
    <property type="evidence" value="ECO:0007669"/>
    <property type="project" value="UniProtKB-UniPathway"/>
</dbReference>
<dbReference type="Gene3D" id="3.40.1160.10">
    <property type="entry name" value="Acetylglutamate kinase-like"/>
    <property type="match status" value="1"/>
</dbReference>
<dbReference type="HAMAP" id="MF_00082">
    <property type="entry name" value="ArgB"/>
    <property type="match status" value="1"/>
</dbReference>
<dbReference type="InterPro" id="IPR036393">
    <property type="entry name" value="AceGlu_kinase-like_sf"/>
</dbReference>
<dbReference type="InterPro" id="IPR004662">
    <property type="entry name" value="AcgluKinase_fam"/>
</dbReference>
<dbReference type="InterPro" id="IPR037528">
    <property type="entry name" value="ArgB"/>
</dbReference>
<dbReference type="InterPro" id="IPR001048">
    <property type="entry name" value="Asp/Glu/Uridylate_kinase"/>
</dbReference>
<dbReference type="NCBIfam" id="TIGR00761">
    <property type="entry name" value="argB"/>
    <property type="match status" value="1"/>
</dbReference>
<dbReference type="PANTHER" id="PTHR23342">
    <property type="entry name" value="N-ACETYLGLUTAMATE SYNTHASE"/>
    <property type="match status" value="1"/>
</dbReference>
<dbReference type="PANTHER" id="PTHR23342:SF0">
    <property type="entry name" value="N-ACETYLGLUTAMATE SYNTHASE, MITOCHONDRIAL"/>
    <property type="match status" value="1"/>
</dbReference>
<dbReference type="Pfam" id="PF00696">
    <property type="entry name" value="AA_kinase"/>
    <property type="match status" value="1"/>
</dbReference>
<dbReference type="PIRSF" id="PIRSF000728">
    <property type="entry name" value="NAGK"/>
    <property type="match status" value="1"/>
</dbReference>
<dbReference type="SUPFAM" id="SSF53633">
    <property type="entry name" value="Carbamate kinase-like"/>
    <property type="match status" value="1"/>
</dbReference>
<proteinExistence type="inferred from homology"/>
<comment type="function">
    <text evidence="1">Catalyzes the ATP-dependent phosphorylation of N-acetyl-L-glutamate.</text>
</comment>
<comment type="catalytic activity">
    <reaction evidence="1">
        <text>N-acetyl-L-glutamate + ATP = N-acetyl-L-glutamyl 5-phosphate + ADP</text>
        <dbReference type="Rhea" id="RHEA:14629"/>
        <dbReference type="ChEBI" id="CHEBI:30616"/>
        <dbReference type="ChEBI" id="CHEBI:44337"/>
        <dbReference type="ChEBI" id="CHEBI:57936"/>
        <dbReference type="ChEBI" id="CHEBI:456216"/>
        <dbReference type="EC" id="2.7.2.8"/>
    </reaction>
</comment>
<comment type="pathway">
    <text evidence="1">Amino-acid biosynthesis; L-arginine biosynthesis; N(2)-acetyl-L-ornithine from L-glutamate: step 2/4.</text>
</comment>
<comment type="subcellular location">
    <subcellularLocation>
        <location evidence="1">Cytoplasm</location>
    </subcellularLocation>
</comment>
<comment type="similarity">
    <text evidence="1">Belongs to the acetylglutamate kinase family. ArgB subfamily.</text>
</comment>
<accession>Q5E2E6</accession>
<name>ARGB_ALIF1</name>